<proteinExistence type="inferred from homology"/>
<gene>
    <name evidence="1" type="primary">rpsN</name>
    <name type="ordered locus">Ping_3511</name>
</gene>
<comment type="function">
    <text evidence="1">Binds 16S rRNA, required for the assembly of 30S particles and may also be responsible for determining the conformation of the 16S rRNA at the A site.</text>
</comment>
<comment type="subunit">
    <text evidence="1">Part of the 30S ribosomal subunit. Contacts proteins S3 and S10.</text>
</comment>
<comment type="similarity">
    <text evidence="1">Belongs to the universal ribosomal protein uS14 family.</text>
</comment>
<reference key="1">
    <citation type="journal article" date="2008" name="BMC Genomics">
        <title>Genomics of an extreme psychrophile, Psychromonas ingrahamii.</title>
        <authorList>
            <person name="Riley M."/>
            <person name="Staley J.T."/>
            <person name="Danchin A."/>
            <person name="Wang T.Z."/>
            <person name="Brettin T.S."/>
            <person name="Hauser L.J."/>
            <person name="Land M.L."/>
            <person name="Thompson L.S."/>
        </authorList>
    </citation>
    <scope>NUCLEOTIDE SEQUENCE [LARGE SCALE GENOMIC DNA]</scope>
    <source>
        <strain>DSM 17664 / CCUG 51855 / 37</strain>
    </source>
</reference>
<sequence length="101" mass="11682">MAKQSMKAREVKRAKLVVKFAEQRATLKTTINDVNATDEDRWSAMLKLQTLPRDSSPVRKRNRCSVTGRPHGFLRKFGMSRIKVREHMMRGEIPGLKKASW</sequence>
<name>RS14_PSYIN</name>
<protein>
    <recommendedName>
        <fullName evidence="1">Small ribosomal subunit protein uS14</fullName>
    </recommendedName>
    <alternativeName>
        <fullName evidence="2">30S ribosomal protein S14</fullName>
    </alternativeName>
</protein>
<organism>
    <name type="scientific">Psychromonas ingrahamii (strain DSM 17664 / CCUG 51855 / 37)</name>
    <dbReference type="NCBI Taxonomy" id="357804"/>
    <lineage>
        <taxon>Bacteria</taxon>
        <taxon>Pseudomonadati</taxon>
        <taxon>Pseudomonadota</taxon>
        <taxon>Gammaproteobacteria</taxon>
        <taxon>Alteromonadales</taxon>
        <taxon>Psychromonadaceae</taxon>
        <taxon>Psychromonas</taxon>
    </lineage>
</organism>
<evidence type="ECO:0000255" key="1">
    <source>
        <dbReference type="HAMAP-Rule" id="MF_00537"/>
    </source>
</evidence>
<evidence type="ECO:0000305" key="2"/>
<feature type="chain" id="PRO_1000128526" description="Small ribosomal subunit protein uS14">
    <location>
        <begin position="1"/>
        <end position="101"/>
    </location>
</feature>
<keyword id="KW-1185">Reference proteome</keyword>
<keyword id="KW-0687">Ribonucleoprotein</keyword>
<keyword id="KW-0689">Ribosomal protein</keyword>
<keyword id="KW-0694">RNA-binding</keyword>
<keyword id="KW-0699">rRNA-binding</keyword>
<accession>A1T0C9</accession>
<dbReference type="EMBL" id="CP000510">
    <property type="protein sequence ID" value="ABM05194.1"/>
    <property type="molecule type" value="Genomic_DNA"/>
</dbReference>
<dbReference type="RefSeq" id="WP_011771742.1">
    <property type="nucleotide sequence ID" value="NC_008709.1"/>
</dbReference>
<dbReference type="SMR" id="A1T0C9"/>
<dbReference type="STRING" id="357804.Ping_3511"/>
<dbReference type="KEGG" id="pin:Ping_3511"/>
<dbReference type="eggNOG" id="COG0199">
    <property type="taxonomic scope" value="Bacteria"/>
</dbReference>
<dbReference type="HOGENOM" id="CLU_139869_0_1_6"/>
<dbReference type="OrthoDB" id="9810484at2"/>
<dbReference type="Proteomes" id="UP000000639">
    <property type="component" value="Chromosome"/>
</dbReference>
<dbReference type="GO" id="GO:0005737">
    <property type="term" value="C:cytoplasm"/>
    <property type="evidence" value="ECO:0007669"/>
    <property type="project" value="UniProtKB-ARBA"/>
</dbReference>
<dbReference type="GO" id="GO:0015935">
    <property type="term" value="C:small ribosomal subunit"/>
    <property type="evidence" value="ECO:0007669"/>
    <property type="project" value="TreeGrafter"/>
</dbReference>
<dbReference type="GO" id="GO:0019843">
    <property type="term" value="F:rRNA binding"/>
    <property type="evidence" value="ECO:0007669"/>
    <property type="project" value="UniProtKB-UniRule"/>
</dbReference>
<dbReference type="GO" id="GO:0003735">
    <property type="term" value="F:structural constituent of ribosome"/>
    <property type="evidence" value="ECO:0007669"/>
    <property type="project" value="InterPro"/>
</dbReference>
<dbReference type="GO" id="GO:0006412">
    <property type="term" value="P:translation"/>
    <property type="evidence" value="ECO:0007669"/>
    <property type="project" value="UniProtKB-UniRule"/>
</dbReference>
<dbReference type="FunFam" id="1.10.287.1480:FF:000001">
    <property type="entry name" value="30S ribosomal protein S14"/>
    <property type="match status" value="1"/>
</dbReference>
<dbReference type="Gene3D" id="1.10.287.1480">
    <property type="match status" value="1"/>
</dbReference>
<dbReference type="HAMAP" id="MF_00537">
    <property type="entry name" value="Ribosomal_uS14_1"/>
    <property type="match status" value="1"/>
</dbReference>
<dbReference type="InterPro" id="IPR001209">
    <property type="entry name" value="Ribosomal_uS14"/>
</dbReference>
<dbReference type="InterPro" id="IPR023036">
    <property type="entry name" value="Ribosomal_uS14_bac/plastid"/>
</dbReference>
<dbReference type="InterPro" id="IPR018271">
    <property type="entry name" value="Ribosomal_uS14_CS"/>
</dbReference>
<dbReference type="NCBIfam" id="NF006477">
    <property type="entry name" value="PRK08881.1"/>
    <property type="match status" value="1"/>
</dbReference>
<dbReference type="PANTHER" id="PTHR19836">
    <property type="entry name" value="30S RIBOSOMAL PROTEIN S14"/>
    <property type="match status" value="1"/>
</dbReference>
<dbReference type="PANTHER" id="PTHR19836:SF19">
    <property type="entry name" value="SMALL RIBOSOMAL SUBUNIT PROTEIN US14M"/>
    <property type="match status" value="1"/>
</dbReference>
<dbReference type="Pfam" id="PF00253">
    <property type="entry name" value="Ribosomal_S14"/>
    <property type="match status" value="1"/>
</dbReference>
<dbReference type="SUPFAM" id="SSF57716">
    <property type="entry name" value="Glucocorticoid receptor-like (DNA-binding domain)"/>
    <property type="match status" value="1"/>
</dbReference>
<dbReference type="PROSITE" id="PS00527">
    <property type="entry name" value="RIBOSOMAL_S14"/>
    <property type="match status" value="1"/>
</dbReference>